<proteinExistence type="inferred from homology"/>
<name>FADJ_VIBC1</name>
<comment type="function">
    <text evidence="1">Catalyzes the formation of a hydroxyacyl-CoA by addition of water on enoyl-CoA. Also exhibits 3-hydroxyacyl-CoA epimerase and 3-hydroxyacyl-CoA dehydrogenase activities.</text>
</comment>
<comment type="catalytic activity">
    <reaction evidence="1">
        <text>a (3S)-3-hydroxyacyl-CoA = a (2E)-enoyl-CoA + H2O</text>
        <dbReference type="Rhea" id="RHEA:16105"/>
        <dbReference type="ChEBI" id="CHEBI:15377"/>
        <dbReference type="ChEBI" id="CHEBI:57318"/>
        <dbReference type="ChEBI" id="CHEBI:58856"/>
        <dbReference type="EC" id="4.2.1.17"/>
    </reaction>
</comment>
<comment type="catalytic activity">
    <reaction evidence="1">
        <text>a 4-saturated-(3S)-3-hydroxyacyl-CoA = a (3E)-enoyl-CoA + H2O</text>
        <dbReference type="Rhea" id="RHEA:20724"/>
        <dbReference type="ChEBI" id="CHEBI:15377"/>
        <dbReference type="ChEBI" id="CHEBI:58521"/>
        <dbReference type="ChEBI" id="CHEBI:137480"/>
        <dbReference type="EC" id="4.2.1.17"/>
    </reaction>
</comment>
<comment type="catalytic activity">
    <reaction evidence="1">
        <text>a (3S)-3-hydroxyacyl-CoA + NAD(+) = a 3-oxoacyl-CoA + NADH + H(+)</text>
        <dbReference type="Rhea" id="RHEA:22432"/>
        <dbReference type="ChEBI" id="CHEBI:15378"/>
        <dbReference type="ChEBI" id="CHEBI:57318"/>
        <dbReference type="ChEBI" id="CHEBI:57540"/>
        <dbReference type="ChEBI" id="CHEBI:57945"/>
        <dbReference type="ChEBI" id="CHEBI:90726"/>
        <dbReference type="EC" id="1.1.1.35"/>
    </reaction>
</comment>
<comment type="catalytic activity">
    <reaction evidence="1">
        <text>(3S)-3-hydroxybutanoyl-CoA = (3R)-3-hydroxybutanoyl-CoA</text>
        <dbReference type="Rhea" id="RHEA:21760"/>
        <dbReference type="ChEBI" id="CHEBI:57315"/>
        <dbReference type="ChEBI" id="CHEBI:57316"/>
        <dbReference type="EC" id="5.1.2.3"/>
    </reaction>
</comment>
<comment type="pathway">
    <text evidence="1">Lipid metabolism; fatty acid beta-oxidation.</text>
</comment>
<comment type="subunit">
    <text evidence="1">Heterotetramer of two alpha chains (FadJ) and two beta chains (FadI).</text>
</comment>
<comment type="subcellular location">
    <subcellularLocation>
        <location evidence="1">Cytoplasm</location>
    </subcellularLocation>
</comment>
<comment type="similarity">
    <text evidence="1">In the N-terminal section; belongs to the enoyl-CoA hydratase/isomerase family.</text>
</comment>
<comment type="similarity">
    <text evidence="1">In the central section; belongs to the 3-hydroxyacyl-CoA dehydrogenase family.</text>
</comment>
<organism>
    <name type="scientific">Vibrio campbellii (strain ATCC BAA-1116)</name>
    <dbReference type="NCBI Taxonomy" id="2902295"/>
    <lineage>
        <taxon>Bacteria</taxon>
        <taxon>Pseudomonadati</taxon>
        <taxon>Pseudomonadota</taxon>
        <taxon>Gammaproteobacteria</taxon>
        <taxon>Vibrionales</taxon>
        <taxon>Vibrionaceae</taxon>
        <taxon>Vibrio</taxon>
    </lineage>
</organism>
<evidence type="ECO:0000255" key="1">
    <source>
        <dbReference type="HAMAP-Rule" id="MF_01617"/>
    </source>
</evidence>
<dbReference type="EC" id="4.2.1.17" evidence="1"/>
<dbReference type="EC" id="5.1.2.3" evidence="1"/>
<dbReference type="EC" id="1.1.1.35" evidence="1"/>
<dbReference type="EMBL" id="CP000789">
    <property type="protein sequence ID" value="ABU72069.1"/>
    <property type="molecule type" value="Genomic_DNA"/>
</dbReference>
<dbReference type="RefSeq" id="WP_012128616.1">
    <property type="nucleotide sequence ID" value="NC_009783.1"/>
</dbReference>
<dbReference type="SMR" id="A7MS61"/>
<dbReference type="KEGG" id="vha:VIBHAR_03120"/>
<dbReference type="PATRIC" id="fig|338187.36.peg.3048"/>
<dbReference type="UniPathway" id="UPA00659"/>
<dbReference type="Proteomes" id="UP000008152">
    <property type="component" value="Chromosome I"/>
</dbReference>
<dbReference type="GO" id="GO:0005737">
    <property type="term" value="C:cytoplasm"/>
    <property type="evidence" value="ECO:0007669"/>
    <property type="project" value="UniProtKB-SubCell"/>
</dbReference>
<dbReference type="GO" id="GO:0008692">
    <property type="term" value="F:3-hydroxybutyryl-CoA epimerase activity"/>
    <property type="evidence" value="ECO:0007669"/>
    <property type="project" value="UniProtKB-UniRule"/>
</dbReference>
<dbReference type="GO" id="GO:0004300">
    <property type="term" value="F:enoyl-CoA hydratase activity"/>
    <property type="evidence" value="ECO:0007669"/>
    <property type="project" value="UniProtKB-UniRule"/>
</dbReference>
<dbReference type="GO" id="GO:0016509">
    <property type="term" value="F:long-chain-3-hydroxyacyl-CoA dehydrogenase activity"/>
    <property type="evidence" value="ECO:0007669"/>
    <property type="project" value="TreeGrafter"/>
</dbReference>
<dbReference type="GO" id="GO:0070403">
    <property type="term" value="F:NAD+ binding"/>
    <property type="evidence" value="ECO:0007669"/>
    <property type="project" value="InterPro"/>
</dbReference>
<dbReference type="GO" id="GO:0006635">
    <property type="term" value="P:fatty acid beta-oxidation"/>
    <property type="evidence" value="ECO:0007669"/>
    <property type="project" value="UniProtKB-UniRule"/>
</dbReference>
<dbReference type="CDD" id="cd06558">
    <property type="entry name" value="crotonase-like"/>
    <property type="match status" value="1"/>
</dbReference>
<dbReference type="FunFam" id="3.90.226.10:FF:000011">
    <property type="entry name" value="Fatty acid oxidation complex subunit alpha"/>
    <property type="match status" value="1"/>
</dbReference>
<dbReference type="FunFam" id="3.40.50.720:FF:000009">
    <property type="entry name" value="Fatty oxidation complex, alpha subunit"/>
    <property type="match status" value="1"/>
</dbReference>
<dbReference type="Gene3D" id="1.10.1040.50">
    <property type="match status" value="1"/>
</dbReference>
<dbReference type="Gene3D" id="3.90.226.10">
    <property type="entry name" value="2-enoyl-CoA Hydratase, Chain A, domain 1"/>
    <property type="match status" value="1"/>
</dbReference>
<dbReference type="Gene3D" id="3.40.50.720">
    <property type="entry name" value="NAD(P)-binding Rossmann-like Domain"/>
    <property type="match status" value="1"/>
</dbReference>
<dbReference type="HAMAP" id="MF_01617">
    <property type="entry name" value="FadJ"/>
    <property type="match status" value="1"/>
</dbReference>
<dbReference type="InterPro" id="IPR006180">
    <property type="entry name" value="3-OHacyl-CoA_DH_CS"/>
</dbReference>
<dbReference type="InterPro" id="IPR006176">
    <property type="entry name" value="3-OHacyl-CoA_DH_NAD-bd"/>
</dbReference>
<dbReference type="InterPro" id="IPR006108">
    <property type="entry name" value="3HC_DH_C"/>
</dbReference>
<dbReference type="InterPro" id="IPR008927">
    <property type="entry name" value="6-PGluconate_DH-like_C_sf"/>
</dbReference>
<dbReference type="InterPro" id="IPR029045">
    <property type="entry name" value="ClpP/crotonase-like_dom_sf"/>
</dbReference>
<dbReference type="InterPro" id="IPR018376">
    <property type="entry name" value="Enoyl-CoA_hyd/isom_CS"/>
</dbReference>
<dbReference type="InterPro" id="IPR001753">
    <property type="entry name" value="Enoyl-CoA_hydra/iso"/>
</dbReference>
<dbReference type="InterPro" id="IPR050136">
    <property type="entry name" value="FA_oxidation_alpha_subunit"/>
</dbReference>
<dbReference type="InterPro" id="IPR012802">
    <property type="entry name" value="FadJ"/>
</dbReference>
<dbReference type="InterPro" id="IPR036291">
    <property type="entry name" value="NAD(P)-bd_dom_sf"/>
</dbReference>
<dbReference type="NCBIfam" id="TIGR02440">
    <property type="entry name" value="FadJ"/>
    <property type="match status" value="1"/>
</dbReference>
<dbReference type="NCBIfam" id="NF008363">
    <property type="entry name" value="PRK11154.1"/>
    <property type="match status" value="1"/>
</dbReference>
<dbReference type="PANTHER" id="PTHR43612">
    <property type="entry name" value="TRIFUNCTIONAL ENZYME SUBUNIT ALPHA"/>
    <property type="match status" value="1"/>
</dbReference>
<dbReference type="PANTHER" id="PTHR43612:SF3">
    <property type="entry name" value="TRIFUNCTIONAL ENZYME SUBUNIT ALPHA, MITOCHONDRIAL"/>
    <property type="match status" value="1"/>
</dbReference>
<dbReference type="Pfam" id="PF00725">
    <property type="entry name" value="3HCDH"/>
    <property type="match status" value="1"/>
</dbReference>
<dbReference type="Pfam" id="PF02737">
    <property type="entry name" value="3HCDH_N"/>
    <property type="match status" value="1"/>
</dbReference>
<dbReference type="Pfam" id="PF00378">
    <property type="entry name" value="ECH_1"/>
    <property type="match status" value="1"/>
</dbReference>
<dbReference type="SUPFAM" id="SSF48179">
    <property type="entry name" value="6-phosphogluconate dehydrogenase C-terminal domain-like"/>
    <property type="match status" value="2"/>
</dbReference>
<dbReference type="SUPFAM" id="SSF52096">
    <property type="entry name" value="ClpP/crotonase"/>
    <property type="match status" value="1"/>
</dbReference>
<dbReference type="SUPFAM" id="SSF51735">
    <property type="entry name" value="NAD(P)-binding Rossmann-fold domains"/>
    <property type="match status" value="1"/>
</dbReference>
<dbReference type="PROSITE" id="PS00067">
    <property type="entry name" value="3HCDH"/>
    <property type="match status" value="1"/>
</dbReference>
<dbReference type="PROSITE" id="PS00166">
    <property type="entry name" value="ENOYL_COA_HYDRATASE"/>
    <property type="match status" value="1"/>
</dbReference>
<feature type="chain" id="PRO_1000069490" description="Fatty acid oxidation complex subunit alpha">
    <location>
        <begin position="1"/>
        <end position="704"/>
    </location>
</feature>
<feature type="region of interest" description="Enoyl-CoA hydratase" evidence="1">
    <location>
        <begin position="1"/>
        <end position="190"/>
    </location>
</feature>
<feature type="region of interest" description="3-hydroxyacyl-CoA dehydrogenase" evidence="1">
    <location>
        <begin position="308"/>
        <end position="704"/>
    </location>
</feature>
<feature type="site" description="Important for catalytic activity" evidence="1">
    <location>
        <position position="118"/>
    </location>
</feature>
<feature type="site" description="Important for catalytic activity" evidence="1">
    <location>
        <position position="140"/>
    </location>
</feature>
<keyword id="KW-0963">Cytoplasm</keyword>
<keyword id="KW-0276">Fatty acid metabolism</keyword>
<keyword id="KW-0413">Isomerase</keyword>
<keyword id="KW-0442">Lipid degradation</keyword>
<keyword id="KW-0443">Lipid metabolism</keyword>
<keyword id="KW-0456">Lyase</keyword>
<keyword id="KW-0511">Multifunctional enzyme</keyword>
<keyword id="KW-0520">NAD</keyword>
<keyword id="KW-0560">Oxidoreductase</keyword>
<gene>
    <name evidence="1" type="primary">fadJ</name>
    <name type="ordered locus">VIBHAR_03120</name>
</gene>
<protein>
    <recommendedName>
        <fullName evidence="1">Fatty acid oxidation complex subunit alpha</fullName>
    </recommendedName>
    <domain>
        <recommendedName>
            <fullName evidence="1">Enoyl-CoA hydratase/3-hydroxybutyryl-CoA epimerase</fullName>
            <ecNumber evidence="1">4.2.1.17</ecNumber>
            <ecNumber evidence="1">5.1.2.3</ecNumber>
        </recommendedName>
    </domain>
    <domain>
        <recommendedName>
            <fullName evidence="1">3-hydroxyacyl-CoA dehydrogenase</fullName>
            <ecNumber evidence="1">1.1.1.35</ecNumber>
        </recommendedName>
    </domain>
</protein>
<accession>A7MS61</accession>
<reference key="1">
    <citation type="submission" date="2007-08" db="EMBL/GenBank/DDBJ databases">
        <authorList>
            <consortium name="The Vibrio harveyi Genome Sequencing Project"/>
            <person name="Bassler B."/>
            <person name="Clifton S.W."/>
            <person name="Fulton L."/>
            <person name="Delehaunty K."/>
            <person name="Fronick C."/>
            <person name="Harrison M."/>
            <person name="Markivic C."/>
            <person name="Fulton R."/>
            <person name="Tin-Wollam A.-M."/>
            <person name="Shah N."/>
            <person name="Pepin K."/>
            <person name="Nash W."/>
            <person name="Thiruvilangam P."/>
            <person name="Bhonagiri V."/>
            <person name="Waters C."/>
            <person name="Tu K.C."/>
            <person name="Irgon J."/>
            <person name="Wilson R.K."/>
        </authorList>
    </citation>
    <scope>NUCLEOTIDE SEQUENCE [LARGE SCALE GENOMIC DNA]</scope>
    <source>
        <strain>ATCC BAA-1116 / BB120</strain>
    </source>
</reference>
<sequence length="704" mass="76776">MSEQKAFSLKIDEQNIAWLAIDVPNEKMNTLQAAFADEMKEIFAQLKDTSGVKGMVIHSLKPDNFVAGADVRMLEACTTASEAEALAKQGQELFQQLSDLPYPVVAAIHGPCLGGGLELALACDYRVCTDSDKTRLGLPEVQLGLLPGSGGTQRLPRLIGLLPSLDLILTGKQLRAKKAKKLGVVDACVPETVLLDIAKMHVEKGKKKGKQKQSTKEKLMSGSGLGRKFVFEQAAKKTNEKTRGNYPATVAILEVIQHGLEKGFAQGQELEAKRFGELVMSSESKALRSIFFATTEMKKENGAEAEPTAVNKVGVLGGGLMGAGISHVSVAKAKVPVRIKDVSNDGVLNALNYNYKLFEKQRKRRIISKAGLQSKMLQLSGGIDFTSFNHIDVVIEAVFEDLDLKQAMVADIEANAKPETIFATNTSSLPIHKIAEKAERPENIVGLHYFSPVEKMPLVEVIPHETTSEETISTVVALAKKQGKTPIVVKDKAGFYVNRILAPYMNEAAHILLANEPIEQLDGALLDFGFPVGPITLLDEVGVDIGAKIMPILVNELGERFKGPDVFDTLLNDGRKGRKTGKGFYTYKGKKKEVDKSVYKLLNLTPESKLSDNDIALRCVLPMLNEAVRCLDDGIIRSPRDGDIGAIFGIGFPPFLGGPFCYMDQFGLKELVEKMNEFASKYGDRYAPCDGLLTRAGEGRNFYD</sequence>